<feature type="chain" id="PRO_0000454688" description="Sesquiterpene synthase 16">
    <location>
        <begin position="1"/>
        <end position="405"/>
    </location>
</feature>
<feature type="short sequence motif" description="DDXXD motif" evidence="1">
    <location>
        <begin position="155"/>
        <end position="159"/>
    </location>
</feature>
<feature type="binding site" evidence="2">
    <location>
        <position position="155"/>
    </location>
    <ligand>
        <name>Mg(2+)</name>
        <dbReference type="ChEBI" id="CHEBI:18420"/>
        <label>1</label>
    </ligand>
</feature>
<feature type="binding site" evidence="2">
    <location>
        <position position="155"/>
    </location>
    <ligand>
        <name>Mg(2+)</name>
        <dbReference type="ChEBI" id="CHEBI:18420"/>
        <label>2</label>
    </ligand>
</feature>
<feature type="binding site" evidence="2">
    <location>
        <position position="159"/>
    </location>
    <ligand>
        <name>Mg(2+)</name>
        <dbReference type="ChEBI" id="CHEBI:18420"/>
        <label>1</label>
    </ligand>
</feature>
<feature type="binding site" evidence="2">
    <location>
        <position position="159"/>
    </location>
    <ligand>
        <name>Mg(2+)</name>
        <dbReference type="ChEBI" id="CHEBI:18420"/>
        <label>2</label>
    </ligand>
</feature>
<feature type="binding site" evidence="2">
    <location>
        <position position="309"/>
    </location>
    <ligand>
        <name>Mg(2+)</name>
        <dbReference type="ChEBI" id="CHEBI:18420"/>
        <label>3</label>
    </ligand>
</feature>
<organism>
    <name type="scientific">Solanum habrochaites</name>
    <name type="common">Wild tomato</name>
    <name type="synonym">Lycopersicon hirsutum</name>
    <dbReference type="NCBI Taxonomy" id="62890"/>
    <lineage>
        <taxon>Eukaryota</taxon>
        <taxon>Viridiplantae</taxon>
        <taxon>Streptophyta</taxon>
        <taxon>Embryophyta</taxon>
        <taxon>Tracheophyta</taxon>
        <taxon>Spermatophyta</taxon>
        <taxon>Magnoliopsida</taxon>
        <taxon>eudicotyledons</taxon>
        <taxon>Gunneridae</taxon>
        <taxon>Pentapetalae</taxon>
        <taxon>asterids</taxon>
        <taxon>lamiids</taxon>
        <taxon>Solanales</taxon>
        <taxon>Solanaceae</taxon>
        <taxon>Solanoideae</taxon>
        <taxon>Solaneae</taxon>
        <taxon>Solanum</taxon>
        <taxon>Solanum subgen. Lycopersicon</taxon>
    </lineage>
</organism>
<reference key="1">
    <citation type="journal article" date="2011" name="Plant Mol. Biol.">
        <title>RNA-seq discovery, functional characterization, and comparison of sesquiterpene synthases from Solanum lycopersicum and Solanum habrochaites trichomes.</title>
        <authorList>
            <person name="Bleeker P.M."/>
            <person name="Spyropoulou E.A."/>
            <person name="Diergaarde P.J."/>
            <person name="Volpin H."/>
            <person name="De Both M.T.J."/>
            <person name="Zerbe P."/>
            <person name="Bohlmann J."/>
            <person name="Falara V."/>
            <person name="Matsuba Y."/>
            <person name="Pichersky E."/>
            <person name="Haring M.A."/>
            <person name="Schuurink R.C."/>
        </authorList>
    </citation>
    <scope>NUCLEOTIDE SEQUENCE [MRNA]</scope>
    <scope>PATHWAY</scope>
    <scope>GENE FAMILY</scope>
    <source>
        <strain>cv. PI127826</strain>
    </source>
</reference>
<gene>
    <name evidence="4" type="primary">TPS16</name>
</gene>
<dbReference type="EMBL" id="JN402398">
    <property type="status" value="NOT_ANNOTATED_CDS"/>
    <property type="molecule type" value="mRNA"/>
</dbReference>
<dbReference type="SMR" id="P0DO47"/>
<dbReference type="UniPathway" id="UPA00213"/>
<dbReference type="GO" id="GO:0000287">
    <property type="term" value="F:magnesium ion binding"/>
    <property type="evidence" value="ECO:0007669"/>
    <property type="project" value="InterPro"/>
</dbReference>
<dbReference type="GO" id="GO:0010333">
    <property type="term" value="F:terpene synthase activity"/>
    <property type="evidence" value="ECO:0007669"/>
    <property type="project" value="InterPro"/>
</dbReference>
<dbReference type="GO" id="GO:0016102">
    <property type="term" value="P:diterpenoid biosynthetic process"/>
    <property type="evidence" value="ECO:0007669"/>
    <property type="project" value="InterPro"/>
</dbReference>
<dbReference type="CDD" id="cd00684">
    <property type="entry name" value="Terpene_cyclase_plant_C1"/>
    <property type="match status" value="1"/>
</dbReference>
<dbReference type="FunFam" id="1.10.600.10:FF:000007">
    <property type="entry name" value="Isoprene synthase, chloroplastic"/>
    <property type="match status" value="1"/>
</dbReference>
<dbReference type="Gene3D" id="1.10.600.10">
    <property type="entry name" value="Farnesyl Diphosphate Synthase"/>
    <property type="match status" value="1"/>
</dbReference>
<dbReference type="Gene3D" id="1.50.10.130">
    <property type="entry name" value="Terpene synthase, N-terminal domain"/>
    <property type="match status" value="1"/>
</dbReference>
<dbReference type="InterPro" id="IPR008949">
    <property type="entry name" value="Isoprenoid_synthase_dom_sf"/>
</dbReference>
<dbReference type="InterPro" id="IPR034741">
    <property type="entry name" value="Terpene_cyclase-like_1_C"/>
</dbReference>
<dbReference type="InterPro" id="IPR044814">
    <property type="entry name" value="Terpene_cyclase_plant_C1"/>
</dbReference>
<dbReference type="InterPro" id="IPR001906">
    <property type="entry name" value="Terpene_synth_N"/>
</dbReference>
<dbReference type="InterPro" id="IPR036965">
    <property type="entry name" value="Terpene_synth_N_sf"/>
</dbReference>
<dbReference type="InterPro" id="IPR050148">
    <property type="entry name" value="Terpene_synthase-like"/>
</dbReference>
<dbReference type="InterPro" id="IPR005630">
    <property type="entry name" value="Terpene_synthase_metal-bd"/>
</dbReference>
<dbReference type="InterPro" id="IPR008930">
    <property type="entry name" value="Terpenoid_cyclase/PrenylTrfase"/>
</dbReference>
<dbReference type="PANTHER" id="PTHR31225">
    <property type="entry name" value="OS04G0344100 PROTEIN-RELATED"/>
    <property type="match status" value="1"/>
</dbReference>
<dbReference type="PANTHER" id="PTHR31225:SF143">
    <property type="entry name" value="TERPENE SYNTHASE 16"/>
    <property type="match status" value="1"/>
</dbReference>
<dbReference type="Pfam" id="PF01397">
    <property type="entry name" value="Terpene_synth"/>
    <property type="match status" value="1"/>
</dbReference>
<dbReference type="Pfam" id="PF03936">
    <property type="entry name" value="Terpene_synth_C"/>
    <property type="match status" value="1"/>
</dbReference>
<dbReference type="SFLD" id="SFLDS00005">
    <property type="entry name" value="Isoprenoid_Synthase_Type_I"/>
    <property type="match status" value="1"/>
</dbReference>
<dbReference type="SFLD" id="SFLDG01019">
    <property type="entry name" value="Terpene_Cyclase_Like_1_C_Termi"/>
    <property type="match status" value="1"/>
</dbReference>
<dbReference type="SUPFAM" id="SSF48239">
    <property type="entry name" value="Terpenoid cyclases/Protein prenyltransferases"/>
    <property type="match status" value="1"/>
</dbReference>
<dbReference type="SUPFAM" id="SSF48576">
    <property type="entry name" value="Terpenoid synthases"/>
    <property type="match status" value="1"/>
</dbReference>
<sequence length="405" mass="47307">MLSLYEAAQFRVHDEEILDEALKFTTTHLKLILPELSNSLLAQQVGNALKFPIKDGVVRVEARKYISFYQQNQNHNQVLLNFAKLDFNILQMLHKKELCDITRWWKELEIVKALPYVRDRLAEVYFWSLGVYFEPQYSTARKILTKNISMISLIDDTYDIYGTLDELTLFTEAIERWNIDASEQLQLPSYMKIIYCGLLDVYDEIKKDLANENKSFLINYSIIEMKKMVMAYFQEATWYYGKTIPKMEQYMKNGISTSAYVQIAATSWLGMGNVATKDSFDWIVNEPPILVASSIIARLLNDLLSHEEEQKRGDAPSSVECYMKEYGVTKEEAHIKIRNIIENSWKDLNEEYFKVNGTIIPRVLLMCIINLARVIEFIYKDEDAYTFSKNNLKDVVYRILIDPII</sequence>
<evidence type="ECO:0000250" key="1">
    <source>
        <dbReference type="UniProtKB" id="A0A1C9J6A7"/>
    </source>
</evidence>
<evidence type="ECO:0000250" key="2">
    <source>
        <dbReference type="UniProtKB" id="Q40577"/>
    </source>
</evidence>
<evidence type="ECO:0000269" key="3">
    <source>
    </source>
</evidence>
<evidence type="ECO:0000303" key="4">
    <source>
    </source>
</evidence>
<evidence type="ECO:0000305" key="5"/>
<accession>P0DO47</accession>
<proteinExistence type="evidence at transcript level"/>
<name>TPS16_SOLHA</name>
<protein>
    <recommendedName>
        <fullName evidence="4">Sesquiterpene synthase 16</fullName>
        <shortName evidence="4">ShTPS16</shortName>
    </recommendedName>
</protein>
<keyword id="KW-0460">Magnesium</keyword>
<keyword id="KW-0479">Metal-binding</keyword>
<comment type="function">
    <text evidence="3">Sesquiterpene synthase involved in the biosynthesis of volatile compounds (PubMed:21818683). No activity detected with geranyl diphosphate (GPP) and farnesyl diphosphate (FPP) as substrates (PubMed:21818683).</text>
</comment>
<comment type="cofactor">
    <cofactor evidence="1">
        <name>Mg(2+)</name>
        <dbReference type="ChEBI" id="CHEBI:18420"/>
    </cofactor>
    <cofactor evidence="1">
        <name>Mn(2+)</name>
        <dbReference type="ChEBI" id="CHEBI:29035"/>
    </cofactor>
    <text evidence="1">Binds 3 Mg(2+) or Mn(2+) ions per subunit.</text>
</comment>
<comment type="pathway">
    <text evidence="3">Secondary metabolite biosynthesis; terpenoid biosynthesis.</text>
</comment>
<comment type="domain">
    <text evidence="2">The Asp-Asp-Xaa-Xaa-Asp/Glu (DDXXD/E) motif is important for the catalytic activity, presumably through binding to Mg(2+).</text>
</comment>
<comment type="similarity">
    <text evidence="5">Belongs to the terpene synthase family. Tpsa subfamily.</text>
</comment>